<comment type="similarity">
    <text evidence="1">Belongs to the UPF0763 family.</text>
</comment>
<dbReference type="EMBL" id="CP000538">
    <property type="protein sequence ID" value="EAQ72041.1"/>
    <property type="molecule type" value="Genomic_DNA"/>
</dbReference>
<dbReference type="RefSeq" id="WP_002856534.1">
    <property type="nucleotide sequence ID" value="NC_008787.1"/>
</dbReference>
<dbReference type="SMR" id="A1VZY1"/>
<dbReference type="KEGG" id="cjj:CJJ81176_1011"/>
<dbReference type="eggNOG" id="ENOG5030YCA">
    <property type="taxonomic scope" value="Bacteria"/>
</dbReference>
<dbReference type="HOGENOM" id="CLU_120359_1_0_7"/>
<dbReference type="Proteomes" id="UP000000646">
    <property type="component" value="Chromosome"/>
</dbReference>
<dbReference type="HAMAP" id="MF_02110">
    <property type="entry name" value="UPF0763"/>
    <property type="match status" value="1"/>
</dbReference>
<dbReference type="InterPro" id="IPR019724">
    <property type="entry name" value="UPF0763"/>
</dbReference>
<dbReference type="Pfam" id="PF10788">
    <property type="entry name" value="DUF2603"/>
    <property type="match status" value="1"/>
</dbReference>
<sequence>MKELEKYNTCLKRIDEFSQNLGIKKKDRTIFKMKQSENENEKCLVLENGSFDSPEPWFVIDENDEIHTLLSLQSLKNILESLKQSQKENFELRLEKAIYQQIPVDFNDVWTVAMDEIKQKAQNGTMEVSIDLEKLISKIKQEHPNLFVDMQAMIERVNQNERL</sequence>
<name>Y1011_CAMJJ</name>
<reference key="1">
    <citation type="submission" date="2006-12" db="EMBL/GenBank/DDBJ databases">
        <authorList>
            <person name="Fouts D.E."/>
            <person name="Nelson K.E."/>
            <person name="Sebastian Y."/>
        </authorList>
    </citation>
    <scope>NUCLEOTIDE SEQUENCE [LARGE SCALE GENOMIC DNA]</scope>
    <source>
        <strain>81-176</strain>
    </source>
</reference>
<gene>
    <name type="ordered locus">CJJ81176_1011</name>
</gene>
<evidence type="ECO:0000255" key="1">
    <source>
        <dbReference type="HAMAP-Rule" id="MF_02110"/>
    </source>
</evidence>
<organism>
    <name type="scientific">Campylobacter jejuni subsp. jejuni serotype O:23/36 (strain 81-176)</name>
    <dbReference type="NCBI Taxonomy" id="354242"/>
    <lineage>
        <taxon>Bacteria</taxon>
        <taxon>Pseudomonadati</taxon>
        <taxon>Campylobacterota</taxon>
        <taxon>Epsilonproteobacteria</taxon>
        <taxon>Campylobacterales</taxon>
        <taxon>Campylobacteraceae</taxon>
        <taxon>Campylobacter</taxon>
    </lineage>
</organism>
<accession>A1VZY1</accession>
<proteinExistence type="inferred from homology"/>
<protein>
    <recommendedName>
        <fullName evidence="1">UPF0763 protein CJJ81176_1011</fullName>
    </recommendedName>
</protein>
<feature type="chain" id="PRO_0000394781" description="UPF0763 protein CJJ81176_1011">
    <location>
        <begin position="1"/>
        <end position="163"/>
    </location>
</feature>